<sequence>MAAAINAAVPSPPVAPSAPPPPPPPLGQASDRFPSLVLELVFSYLDLPDLRSCGLVCKRWYRCLHGDKNSDVWRSLCCRIVSEEALRTDILCNLRTYKAKVRAFQHGLSSSDCSRNVFIKKNGFTLHRNPIAQSTDGARTKIGFSEGRHAWEVWWEGPLGTVAVIGIATKQAPMQCQGYVALLGSDDQSWGWNLVDNNLLHNGEVNGSFPQCNNAPKYQIGERIRVILDMEDKTLAFERGYEYLGVAFRGLPKACLYPAVSAVYGNTEVTLVYLGKPLDG</sequence>
<keyword id="KW-1185">Reference proteome</keyword>
<keyword id="KW-0833">Ubl conjugation pathway</keyword>
<reference key="1">
    <citation type="submission" date="2003-01" db="EMBL/GenBank/DDBJ databases">
        <authorList>
            <consortium name="NIH - Xenopus Gene Collection (XGC) project"/>
        </authorList>
    </citation>
    <scope>NUCLEOTIDE SEQUENCE [LARGE SCALE MRNA]</scope>
    <source>
        <tissue>Embryo</tissue>
    </source>
</reference>
<comment type="pathway">
    <text>Protein modification; protein ubiquitination.</text>
</comment>
<comment type="subunit">
    <text evidence="1">Probable component of a E3 ubiquitin ligase complex.</text>
</comment>
<comment type="similarity">
    <text evidence="5">Belongs to the FBXO45/Fsn family.</text>
</comment>
<accession>Q7ZXY1</accession>
<dbReference type="EMBL" id="BC044070">
    <property type="protein sequence ID" value="AAH44070.1"/>
    <property type="molecule type" value="mRNA"/>
</dbReference>
<dbReference type="RefSeq" id="NP_001080739.1">
    <property type="nucleotide sequence ID" value="NM_001087270.1"/>
</dbReference>
<dbReference type="SMR" id="Q7ZXY1"/>
<dbReference type="DNASU" id="380431"/>
<dbReference type="AGR" id="Xenbase:XB-GENE-6078307"/>
<dbReference type="Xenbase" id="XB-GENE-6078307">
    <property type="gene designation" value="fbxo45.S"/>
</dbReference>
<dbReference type="OMA" id="WEITWIE"/>
<dbReference type="OrthoDB" id="2398163at2759"/>
<dbReference type="UniPathway" id="UPA00143"/>
<dbReference type="Proteomes" id="UP000186698">
    <property type="component" value="Unplaced"/>
</dbReference>
<dbReference type="Bgee" id="380431">
    <property type="expression patterns" value="Expressed in spleen and 19 other cell types or tissues"/>
</dbReference>
<dbReference type="GO" id="GO:0019005">
    <property type="term" value="C:SCF ubiquitin ligase complex"/>
    <property type="evidence" value="ECO:0000318"/>
    <property type="project" value="GO_Central"/>
</dbReference>
<dbReference type="GO" id="GO:0045202">
    <property type="term" value="C:synapse"/>
    <property type="evidence" value="ECO:0000318"/>
    <property type="project" value="GO_Central"/>
</dbReference>
<dbReference type="GO" id="GO:0043161">
    <property type="term" value="P:proteasome-mediated ubiquitin-dependent protein catabolic process"/>
    <property type="evidence" value="ECO:0000318"/>
    <property type="project" value="GO_Central"/>
</dbReference>
<dbReference type="GO" id="GO:0016567">
    <property type="term" value="P:protein ubiquitination"/>
    <property type="evidence" value="ECO:0007669"/>
    <property type="project" value="UniProtKB-UniPathway"/>
</dbReference>
<dbReference type="GO" id="GO:0060386">
    <property type="term" value="P:synapse assembly involved in innervation"/>
    <property type="evidence" value="ECO:0000318"/>
    <property type="project" value="GO_Central"/>
</dbReference>
<dbReference type="CDD" id="cd22111">
    <property type="entry name" value="F-box_FBXO45"/>
    <property type="match status" value="1"/>
</dbReference>
<dbReference type="CDD" id="cd12907">
    <property type="entry name" value="SPRY_Fbox"/>
    <property type="match status" value="1"/>
</dbReference>
<dbReference type="FunFam" id="2.60.120.920:FF:000017">
    <property type="entry name" value="F-box/SPRY domain-containing protein 1"/>
    <property type="match status" value="1"/>
</dbReference>
<dbReference type="Gene3D" id="1.20.1280.50">
    <property type="match status" value="1"/>
</dbReference>
<dbReference type="Gene3D" id="2.60.120.920">
    <property type="match status" value="1"/>
</dbReference>
<dbReference type="InterPro" id="IPR001870">
    <property type="entry name" value="B30.2/SPRY"/>
</dbReference>
<dbReference type="InterPro" id="IPR043136">
    <property type="entry name" value="B30.2/SPRY_sf"/>
</dbReference>
<dbReference type="InterPro" id="IPR013320">
    <property type="entry name" value="ConA-like_dom_sf"/>
</dbReference>
<dbReference type="InterPro" id="IPR036047">
    <property type="entry name" value="F-box-like_dom_sf"/>
</dbReference>
<dbReference type="InterPro" id="IPR001810">
    <property type="entry name" value="F-box_dom"/>
</dbReference>
<dbReference type="InterPro" id="IPR050672">
    <property type="entry name" value="FBXO45-Fsn/SPSB_families"/>
</dbReference>
<dbReference type="InterPro" id="IPR003877">
    <property type="entry name" value="SPRY_dom"/>
</dbReference>
<dbReference type="InterPro" id="IPR035784">
    <property type="entry name" value="SPRY_FBXO45"/>
</dbReference>
<dbReference type="PANTHER" id="PTHR12245:SF7">
    <property type="entry name" value="F-BOX_SPRY DOMAIN-CONTAINING PROTEIN 1"/>
    <property type="match status" value="1"/>
</dbReference>
<dbReference type="PANTHER" id="PTHR12245">
    <property type="entry name" value="SPRY DOMAIN CONTAINING SOCS BOX PROTEIN"/>
    <property type="match status" value="1"/>
</dbReference>
<dbReference type="Pfam" id="PF12937">
    <property type="entry name" value="F-box-like"/>
    <property type="match status" value="1"/>
</dbReference>
<dbReference type="Pfam" id="PF00622">
    <property type="entry name" value="SPRY"/>
    <property type="match status" value="1"/>
</dbReference>
<dbReference type="SMART" id="SM00256">
    <property type="entry name" value="FBOX"/>
    <property type="match status" value="1"/>
</dbReference>
<dbReference type="SMART" id="SM00449">
    <property type="entry name" value="SPRY"/>
    <property type="match status" value="1"/>
</dbReference>
<dbReference type="SUPFAM" id="SSF49899">
    <property type="entry name" value="Concanavalin A-like lectins/glucanases"/>
    <property type="match status" value="1"/>
</dbReference>
<dbReference type="SUPFAM" id="SSF81383">
    <property type="entry name" value="F-box domain"/>
    <property type="match status" value="1"/>
</dbReference>
<dbReference type="PROSITE" id="PS50188">
    <property type="entry name" value="B302_SPRY"/>
    <property type="match status" value="1"/>
</dbReference>
<dbReference type="PROSITE" id="PS50181">
    <property type="entry name" value="FBOX"/>
    <property type="match status" value="1"/>
</dbReference>
<organism>
    <name type="scientific">Xenopus laevis</name>
    <name type="common">African clawed frog</name>
    <dbReference type="NCBI Taxonomy" id="8355"/>
    <lineage>
        <taxon>Eukaryota</taxon>
        <taxon>Metazoa</taxon>
        <taxon>Chordata</taxon>
        <taxon>Craniata</taxon>
        <taxon>Vertebrata</taxon>
        <taxon>Euteleostomi</taxon>
        <taxon>Amphibia</taxon>
        <taxon>Batrachia</taxon>
        <taxon>Anura</taxon>
        <taxon>Pipoidea</taxon>
        <taxon>Pipidae</taxon>
        <taxon>Xenopodinae</taxon>
        <taxon>Xenopus</taxon>
        <taxon>Xenopus</taxon>
    </lineage>
</organism>
<feature type="chain" id="PRO_0000383745" description="F-box/SPRY domain-containing protein 1">
    <location>
        <begin position="1"/>
        <end position="280"/>
    </location>
</feature>
<feature type="domain" description="F-box" evidence="2">
    <location>
        <begin position="27"/>
        <end position="76"/>
    </location>
</feature>
<feature type="domain" description="B30.2/SPRY" evidence="3">
    <location>
        <begin position="86"/>
        <end position="278"/>
    </location>
</feature>
<feature type="region of interest" description="Disordered" evidence="4">
    <location>
        <begin position="1"/>
        <end position="28"/>
    </location>
</feature>
<feature type="compositionally biased region" description="Pro residues" evidence="4">
    <location>
        <begin position="10"/>
        <end position="26"/>
    </location>
</feature>
<evidence type="ECO:0000250" key="1"/>
<evidence type="ECO:0000255" key="2">
    <source>
        <dbReference type="PROSITE-ProRule" id="PRU00080"/>
    </source>
</evidence>
<evidence type="ECO:0000255" key="3">
    <source>
        <dbReference type="PROSITE-ProRule" id="PRU00548"/>
    </source>
</evidence>
<evidence type="ECO:0000256" key="4">
    <source>
        <dbReference type="SAM" id="MobiDB-lite"/>
    </source>
</evidence>
<evidence type="ECO:0000305" key="5"/>
<name>FBSP1_XENLA</name>
<gene>
    <name type="primary">fbxo45</name>
</gene>
<proteinExistence type="evidence at transcript level"/>
<protein>
    <recommendedName>
        <fullName>F-box/SPRY domain-containing protein 1</fullName>
    </recommendedName>
    <alternativeName>
        <fullName>F-box only protein 45</fullName>
    </alternativeName>
</protein>